<name>GLGX_YERPS</name>
<gene>
    <name evidence="1" type="primary">glgX</name>
    <name type="ordered locus">YPTB3786</name>
</gene>
<feature type="chain" id="PRO_1000067114" description="Glycogen debranching enzyme">
    <location>
        <begin position="1"/>
        <end position="662"/>
    </location>
</feature>
<feature type="active site" description="Nucleophile" evidence="1">
    <location>
        <position position="338"/>
    </location>
</feature>
<feature type="active site" description="Proton donor" evidence="1">
    <location>
        <position position="373"/>
    </location>
</feature>
<feature type="site" description="Transition state stabilizer" evidence="1">
    <location>
        <position position="445"/>
    </location>
</feature>
<organism>
    <name type="scientific">Yersinia pseudotuberculosis serotype I (strain IP32953)</name>
    <dbReference type="NCBI Taxonomy" id="273123"/>
    <lineage>
        <taxon>Bacteria</taxon>
        <taxon>Pseudomonadati</taxon>
        <taxon>Pseudomonadota</taxon>
        <taxon>Gammaproteobacteria</taxon>
        <taxon>Enterobacterales</taxon>
        <taxon>Yersiniaceae</taxon>
        <taxon>Yersinia</taxon>
    </lineage>
</organism>
<proteinExistence type="inferred from homology"/>
<dbReference type="EC" id="3.2.1.196" evidence="1"/>
<dbReference type="EMBL" id="BX936398">
    <property type="protein sequence ID" value="CAH23024.1"/>
    <property type="molecule type" value="Genomic_DNA"/>
</dbReference>
<dbReference type="RefSeq" id="WP_011193250.1">
    <property type="nucleotide sequence ID" value="NC_006155.1"/>
</dbReference>
<dbReference type="SMR" id="Q664I3"/>
<dbReference type="CAZy" id="CBM48">
    <property type="family name" value="Carbohydrate-Binding Module Family 48"/>
</dbReference>
<dbReference type="CAZy" id="GH13">
    <property type="family name" value="Glycoside Hydrolase Family 13"/>
</dbReference>
<dbReference type="GeneID" id="49784217"/>
<dbReference type="KEGG" id="ypo:BZ17_2799"/>
<dbReference type="KEGG" id="yps:YPTB3786"/>
<dbReference type="PATRIC" id="fig|273123.14.peg.2933"/>
<dbReference type="UniPathway" id="UPA00165"/>
<dbReference type="Proteomes" id="UP000001011">
    <property type="component" value="Chromosome"/>
</dbReference>
<dbReference type="GO" id="GO:0004133">
    <property type="term" value="F:glycogen debranching enzyme activity"/>
    <property type="evidence" value="ECO:0007669"/>
    <property type="project" value="UniProtKB-UniRule"/>
</dbReference>
<dbReference type="GO" id="GO:0004553">
    <property type="term" value="F:hydrolase activity, hydrolyzing O-glycosyl compounds"/>
    <property type="evidence" value="ECO:0007669"/>
    <property type="project" value="InterPro"/>
</dbReference>
<dbReference type="GO" id="GO:0005980">
    <property type="term" value="P:glycogen catabolic process"/>
    <property type="evidence" value="ECO:0007669"/>
    <property type="project" value="UniProtKB-UniRule"/>
</dbReference>
<dbReference type="CDD" id="cd11326">
    <property type="entry name" value="AmyAc_Glg_debranch"/>
    <property type="match status" value="1"/>
</dbReference>
<dbReference type="CDD" id="cd02856">
    <property type="entry name" value="E_set_GDE_Isoamylase_N"/>
    <property type="match status" value="1"/>
</dbReference>
<dbReference type="Gene3D" id="3.20.20.80">
    <property type="entry name" value="Glycosidases"/>
    <property type="match status" value="1"/>
</dbReference>
<dbReference type="Gene3D" id="2.60.40.1180">
    <property type="entry name" value="Golgi alpha-mannosidase II"/>
    <property type="match status" value="1"/>
</dbReference>
<dbReference type="Gene3D" id="2.60.40.10">
    <property type="entry name" value="Immunoglobulins"/>
    <property type="match status" value="1"/>
</dbReference>
<dbReference type="HAMAP" id="MF_01248">
    <property type="entry name" value="GlgX"/>
    <property type="match status" value="1"/>
</dbReference>
<dbReference type="InterPro" id="IPR040784">
    <property type="entry name" value="GlgX_C"/>
</dbReference>
<dbReference type="InterPro" id="IPR044505">
    <property type="entry name" value="GlgX_Isoamylase_N_E_set"/>
</dbReference>
<dbReference type="InterPro" id="IPR006047">
    <property type="entry name" value="Glyco_hydro_13_cat_dom"/>
</dbReference>
<dbReference type="InterPro" id="IPR004193">
    <property type="entry name" value="Glyco_hydro_13_N"/>
</dbReference>
<dbReference type="InterPro" id="IPR013780">
    <property type="entry name" value="Glyco_hydro_b"/>
</dbReference>
<dbReference type="InterPro" id="IPR022844">
    <property type="entry name" value="Glycogen_debranch_bac"/>
</dbReference>
<dbReference type="InterPro" id="IPR011837">
    <property type="entry name" value="Glycogen_debranch_GlgX"/>
</dbReference>
<dbReference type="InterPro" id="IPR017853">
    <property type="entry name" value="Glycoside_hydrolase_SF"/>
</dbReference>
<dbReference type="InterPro" id="IPR013783">
    <property type="entry name" value="Ig-like_fold"/>
</dbReference>
<dbReference type="InterPro" id="IPR014756">
    <property type="entry name" value="Ig_E-set"/>
</dbReference>
<dbReference type="NCBIfam" id="TIGR02100">
    <property type="entry name" value="glgX_debranch"/>
    <property type="match status" value="1"/>
</dbReference>
<dbReference type="NCBIfam" id="NF002983">
    <property type="entry name" value="PRK03705.1"/>
    <property type="match status" value="1"/>
</dbReference>
<dbReference type="PANTHER" id="PTHR43002">
    <property type="entry name" value="GLYCOGEN DEBRANCHING ENZYME"/>
    <property type="match status" value="1"/>
</dbReference>
<dbReference type="Pfam" id="PF02922">
    <property type="entry name" value="CBM_48"/>
    <property type="match status" value="1"/>
</dbReference>
<dbReference type="Pfam" id="PF18390">
    <property type="entry name" value="GlgX_C"/>
    <property type="match status" value="1"/>
</dbReference>
<dbReference type="SMART" id="SM00642">
    <property type="entry name" value="Aamy"/>
    <property type="match status" value="1"/>
</dbReference>
<dbReference type="SUPFAM" id="SSF51445">
    <property type="entry name" value="(Trans)glycosidases"/>
    <property type="match status" value="1"/>
</dbReference>
<dbReference type="SUPFAM" id="SSF81296">
    <property type="entry name" value="E set domains"/>
    <property type="match status" value="1"/>
</dbReference>
<dbReference type="SUPFAM" id="SSF51011">
    <property type="entry name" value="Glycosyl hydrolase domain"/>
    <property type="match status" value="1"/>
</dbReference>
<reference key="1">
    <citation type="journal article" date="2004" name="Proc. Natl. Acad. Sci. U.S.A.">
        <title>Insights into the evolution of Yersinia pestis through whole-genome comparison with Yersinia pseudotuberculosis.</title>
        <authorList>
            <person name="Chain P.S.G."/>
            <person name="Carniel E."/>
            <person name="Larimer F.W."/>
            <person name="Lamerdin J."/>
            <person name="Stoutland P.O."/>
            <person name="Regala W.M."/>
            <person name="Georgescu A.M."/>
            <person name="Vergez L.M."/>
            <person name="Land M.L."/>
            <person name="Motin V.L."/>
            <person name="Brubaker R.R."/>
            <person name="Fowler J."/>
            <person name="Hinnebusch J."/>
            <person name="Marceau M."/>
            <person name="Medigue C."/>
            <person name="Simonet M."/>
            <person name="Chenal-Francisque V."/>
            <person name="Souza B."/>
            <person name="Dacheux D."/>
            <person name="Elliott J.M."/>
            <person name="Derbise A."/>
            <person name="Hauser L.J."/>
            <person name="Garcia E."/>
        </authorList>
    </citation>
    <scope>NUCLEOTIDE SEQUENCE [LARGE SCALE GENOMIC DNA]</scope>
    <source>
        <strain>IP32953</strain>
    </source>
</reference>
<accession>Q664I3</accession>
<evidence type="ECO:0000255" key="1">
    <source>
        <dbReference type="HAMAP-Rule" id="MF_01248"/>
    </source>
</evidence>
<protein>
    <recommendedName>
        <fullName evidence="1">Glycogen debranching enzyme</fullName>
        <ecNumber evidence="1">3.2.1.196</ecNumber>
    </recommendedName>
    <alternativeName>
        <fullName evidence="1">Limit dextrin alpha-1,6-maltotetraose-hydrolase</fullName>
    </alternativeName>
</protein>
<sequence>MAVLTHGSPTPSGAYFDGKGINFTLFSAHAEQVTLCLFDEQGQERQIAMPARTGDIWHGYLPGGKPGQRYGYRVSGPFDPSRGHRFNPHKLLIDPRTRALEGKVGDDPRFTGGVSQPDVRDSAAALPKCLVIHEEYDWQGDKPPAIPWGNTVIYEAHVRGLTQLHPDIPPELRGTYAALAHPALIEHLKTLGITTLELLPVQFHIDEPRLQKMGLSNYWGYNVLAPFAVDPDYASGREGISPLRELRDAVKALHNAGIEVILDVVFNHSAELDVFGPTLCQRGIDNASYYWLTPDGEYDNITGCGNALRLSHPYVTQWVIDCLNYWRDSCHVDGFRFDLGTVLGRTPAFDQHAPLFAALAADERLSACKLIAEPWDIGLGGYQLGNFPTGFSEWNDQYRDAMRGFWLRGEVPRGTFAQHFAASSRLFEQRGRLPSASINQITAHDGFTLLDLLCFNQKHNQMNGEENRDGSDNNHSNNFGCEGLVADAAIWQRRKACQRALLTTLLLSQGTPMLLAGDEQGHSQQGNNNAYCQNNILTWLDWGSADRALMTFTADLIRLRQQIPALTQDQWWQSGDSNVQWLDSQGQALSDAAWEQGCQQQLQILLSQRWLVLINATDHECEMHLPEGEWEGIPPFGVSDHAERLTTWRGSAHTICVLIKRD</sequence>
<comment type="function">
    <text evidence="1">Removes maltotriose and maltotetraose chains that are attached by 1,6-alpha-linkage to the limit dextrin main chain, generating a debranched limit dextrin.</text>
</comment>
<comment type="catalytic activity">
    <reaction evidence="1">
        <text>Hydrolysis of (1-&gt;6)-alpha-D-glucosidic linkages to branches with degrees of polymerization of three or four glucose residues in limit dextrin.</text>
        <dbReference type="EC" id="3.2.1.196"/>
    </reaction>
</comment>
<comment type="pathway">
    <text evidence="1">Glycan degradation; glycogen degradation.</text>
</comment>
<comment type="similarity">
    <text evidence="1">Belongs to the glycosyl hydrolase 13 family.</text>
</comment>
<keyword id="KW-0119">Carbohydrate metabolism</keyword>
<keyword id="KW-0321">Glycogen metabolism</keyword>
<keyword id="KW-0326">Glycosidase</keyword>
<keyword id="KW-0378">Hydrolase</keyword>